<comment type="function">
    <text evidence="1">Catalyzes the formation of acetyl phosphate from acetate and ATP. Can also catalyze the reverse reaction.</text>
</comment>
<comment type="catalytic activity">
    <reaction evidence="1">
        <text>acetate + ATP = acetyl phosphate + ADP</text>
        <dbReference type="Rhea" id="RHEA:11352"/>
        <dbReference type="ChEBI" id="CHEBI:22191"/>
        <dbReference type="ChEBI" id="CHEBI:30089"/>
        <dbReference type="ChEBI" id="CHEBI:30616"/>
        <dbReference type="ChEBI" id="CHEBI:456216"/>
        <dbReference type="EC" id="2.7.2.1"/>
    </reaction>
</comment>
<comment type="cofactor">
    <cofactor evidence="1">
        <name>Mg(2+)</name>
        <dbReference type="ChEBI" id="CHEBI:18420"/>
    </cofactor>
    <cofactor evidence="1">
        <name>Mn(2+)</name>
        <dbReference type="ChEBI" id="CHEBI:29035"/>
    </cofactor>
    <text evidence="1">Mg(2+). Can also accept Mn(2+).</text>
</comment>
<comment type="pathway">
    <text evidence="1">Metabolic intermediate biosynthesis; acetyl-CoA biosynthesis; acetyl-CoA from acetate: step 1/2.</text>
</comment>
<comment type="subunit">
    <text evidence="1">Homodimer.</text>
</comment>
<comment type="subcellular location">
    <subcellularLocation>
        <location evidence="1">Cytoplasm</location>
    </subcellularLocation>
</comment>
<comment type="similarity">
    <text evidence="1">Belongs to the acetokinase family.</text>
</comment>
<protein>
    <recommendedName>
        <fullName evidence="1">Acetate kinase</fullName>
        <ecNumber evidence="1">2.7.2.1</ecNumber>
    </recommendedName>
    <alternativeName>
        <fullName evidence="1">Acetokinase</fullName>
    </alternativeName>
</protein>
<gene>
    <name evidence="1" type="primary">ackA</name>
    <name type="ordered locus">tlr2340</name>
</gene>
<keyword id="KW-0067">ATP-binding</keyword>
<keyword id="KW-0963">Cytoplasm</keyword>
<keyword id="KW-0418">Kinase</keyword>
<keyword id="KW-0460">Magnesium</keyword>
<keyword id="KW-0479">Metal-binding</keyword>
<keyword id="KW-0547">Nucleotide-binding</keyword>
<keyword id="KW-1185">Reference proteome</keyword>
<keyword id="KW-0808">Transferase</keyword>
<dbReference type="EC" id="2.7.2.1" evidence="1"/>
<dbReference type="EMBL" id="BA000039">
    <property type="protein sequence ID" value="BAC09892.1"/>
    <property type="molecule type" value="Genomic_DNA"/>
</dbReference>
<dbReference type="RefSeq" id="NP_683130.1">
    <property type="nucleotide sequence ID" value="NC_004113.1"/>
</dbReference>
<dbReference type="RefSeq" id="WP_011058173.1">
    <property type="nucleotide sequence ID" value="NC_004113.1"/>
</dbReference>
<dbReference type="SMR" id="Q8DGH7"/>
<dbReference type="STRING" id="197221.gene:10748959"/>
<dbReference type="EnsemblBacteria" id="BAC09892">
    <property type="protein sequence ID" value="BAC09892"/>
    <property type="gene ID" value="BAC09892"/>
</dbReference>
<dbReference type="KEGG" id="tel:tlr2340"/>
<dbReference type="PATRIC" id="fig|197221.4.peg.2453"/>
<dbReference type="eggNOG" id="COG0282">
    <property type="taxonomic scope" value="Bacteria"/>
</dbReference>
<dbReference type="UniPathway" id="UPA00340">
    <property type="reaction ID" value="UER00458"/>
</dbReference>
<dbReference type="Proteomes" id="UP000000440">
    <property type="component" value="Chromosome"/>
</dbReference>
<dbReference type="GO" id="GO:0005737">
    <property type="term" value="C:cytoplasm"/>
    <property type="evidence" value="ECO:0007669"/>
    <property type="project" value="UniProtKB-SubCell"/>
</dbReference>
<dbReference type="GO" id="GO:0008776">
    <property type="term" value="F:acetate kinase activity"/>
    <property type="evidence" value="ECO:0007669"/>
    <property type="project" value="UniProtKB-UniRule"/>
</dbReference>
<dbReference type="GO" id="GO:0005524">
    <property type="term" value="F:ATP binding"/>
    <property type="evidence" value="ECO:0007669"/>
    <property type="project" value="UniProtKB-KW"/>
</dbReference>
<dbReference type="GO" id="GO:0000287">
    <property type="term" value="F:magnesium ion binding"/>
    <property type="evidence" value="ECO:0007669"/>
    <property type="project" value="UniProtKB-UniRule"/>
</dbReference>
<dbReference type="GO" id="GO:0006083">
    <property type="term" value="P:acetate metabolic process"/>
    <property type="evidence" value="ECO:0007669"/>
    <property type="project" value="TreeGrafter"/>
</dbReference>
<dbReference type="GO" id="GO:0006085">
    <property type="term" value="P:acetyl-CoA biosynthetic process"/>
    <property type="evidence" value="ECO:0007669"/>
    <property type="project" value="UniProtKB-UniRule"/>
</dbReference>
<dbReference type="CDD" id="cd24010">
    <property type="entry name" value="ASKHA_NBD_AcK_PK"/>
    <property type="match status" value="1"/>
</dbReference>
<dbReference type="Gene3D" id="3.30.420.40">
    <property type="match status" value="2"/>
</dbReference>
<dbReference type="HAMAP" id="MF_00020">
    <property type="entry name" value="Acetate_kinase"/>
    <property type="match status" value="1"/>
</dbReference>
<dbReference type="InterPro" id="IPR004372">
    <property type="entry name" value="Ac/propionate_kinase"/>
</dbReference>
<dbReference type="InterPro" id="IPR000890">
    <property type="entry name" value="Aliphatic_acid_kin_short-chain"/>
</dbReference>
<dbReference type="InterPro" id="IPR023865">
    <property type="entry name" value="Aliphatic_acid_kinase_CS"/>
</dbReference>
<dbReference type="InterPro" id="IPR043129">
    <property type="entry name" value="ATPase_NBD"/>
</dbReference>
<dbReference type="NCBIfam" id="TIGR00016">
    <property type="entry name" value="ackA"/>
    <property type="match status" value="1"/>
</dbReference>
<dbReference type="PANTHER" id="PTHR21060">
    <property type="entry name" value="ACETATE KINASE"/>
    <property type="match status" value="1"/>
</dbReference>
<dbReference type="PANTHER" id="PTHR21060:SF15">
    <property type="entry name" value="ACETATE KINASE-RELATED"/>
    <property type="match status" value="1"/>
</dbReference>
<dbReference type="Pfam" id="PF00871">
    <property type="entry name" value="Acetate_kinase"/>
    <property type="match status" value="1"/>
</dbReference>
<dbReference type="PIRSF" id="PIRSF000722">
    <property type="entry name" value="Acetate_prop_kin"/>
    <property type="match status" value="1"/>
</dbReference>
<dbReference type="PRINTS" id="PR00471">
    <property type="entry name" value="ACETATEKNASE"/>
</dbReference>
<dbReference type="SUPFAM" id="SSF53067">
    <property type="entry name" value="Actin-like ATPase domain"/>
    <property type="match status" value="2"/>
</dbReference>
<dbReference type="PROSITE" id="PS01075">
    <property type="entry name" value="ACETATE_KINASE_1"/>
    <property type="match status" value="1"/>
</dbReference>
<dbReference type="PROSITE" id="PS01076">
    <property type="entry name" value="ACETATE_KINASE_2"/>
    <property type="match status" value="1"/>
</dbReference>
<accession>Q8DGH7</accession>
<organism>
    <name type="scientific">Thermosynechococcus vestitus (strain NIES-2133 / IAM M-273 / BP-1)</name>
    <dbReference type="NCBI Taxonomy" id="197221"/>
    <lineage>
        <taxon>Bacteria</taxon>
        <taxon>Bacillati</taxon>
        <taxon>Cyanobacteriota</taxon>
        <taxon>Cyanophyceae</taxon>
        <taxon>Acaryochloridales</taxon>
        <taxon>Thermosynechococcaceae</taxon>
        <taxon>Thermosynechococcus</taxon>
    </lineage>
</organism>
<name>ACKA_THEVB</name>
<proteinExistence type="inferred from homology"/>
<reference key="1">
    <citation type="journal article" date="2002" name="DNA Res.">
        <title>Complete genome structure of the thermophilic cyanobacterium Thermosynechococcus elongatus BP-1.</title>
        <authorList>
            <person name="Nakamura Y."/>
            <person name="Kaneko T."/>
            <person name="Sato S."/>
            <person name="Ikeuchi M."/>
            <person name="Katoh H."/>
            <person name="Sasamoto S."/>
            <person name="Watanabe A."/>
            <person name="Iriguchi M."/>
            <person name="Kawashima K."/>
            <person name="Kimura T."/>
            <person name="Kishida Y."/>
            <person name="Kiyokawa C."/>
            <person name="Kohara M."/>
            <person name="Matsumoto M."/>
            <person name="Matsuno A."/>
            <person name="Nakazaki N."/>
            <person name="Shimpo S."/>
            <person name="Sugimoto M."/>
            <person name="Takeuchi C."/>
            <person name="Yamada M."/>
            <person name="Tabata S."/>
        </authorList>
    </citation>
    <scope>NUCLEOTIDE SEQUENCE [LARGE SCALE GENOMIC DNA]</scope>
    <source>
        <strain>NIES-2133 / IAM M-273 / BP-1</strain>
    </source>
</reference>
<feature type="chain" id="PRO_1000090001" description="Acetate kinase">
    <location>
        <begin position="1"/>
        <end position="415"/>
    </location>
</feature>
<feature type="active site" description="Proton donor/acceptor" evidence="1">
    <location>
        <position position="163"/>
    </location>
</feature>
<feature type="binding site" evidence="1">
    <location>
        <position position="8"/>
    </location>
    <ligand>
        <name>Mg(2+)</name>
        <dbReference type="ChEBI" id="CHEBI:18420"/>
    </ligand>
</feature>
<feature type="binding site" evidence="1">
    <location>
        <position position="15"/>
    </location>
    <ligand>
        <name>ATP</name>
        <dbReference type="ChEBI" id="CHEBI:30616"/>
    </ligand>
</feature>
<feature type="binding site" evidence="1">
    <location>
        <position position="106"/>
    </location>
    <ligand>
        <name>substrate</name>
    </ligand>
</feature>
<feature type="binding site" evidence="1">
    <location>
        <begin position="222"/>
        <end position="226"/>
    </location>
    <ligand>
        <name>ATP</name>
        <dbReference type="ChEBI" id="CHEBI:30616"/>
    </ligand>
</feature>
<feature type="binding site" evidence="1">
    <location>
        <begin position="296"/>
        <end position="298"/>
    </location>
    <ligand>
        <name>ATP</name>
        <dbReference type="ChEBI" id="CHEBI:30616"/>
    </ligand>
</feature>
<feature type="binding site" evidence="1">
    <location>
        <begin position="344"/>
        <end position="348"/>
    </location>
    <ligand>
        <name>ATP</name>
        <dbReference type="ChEBI" id="CHEBI:30616"/>
    </ligand>
</feature>
<feature type="binding site" evidence="1">
    <location>
        <position position="397"/>
    </location>
    <ligand>
        <name>Mg(2+)</name>
        <dbReference type="ChEBI" id="CHEBI:18420"/>
    </ligand>
</feature>
<feature type="site" description="Transition state stabilizer" evidence="1">
    <location>
        <position position="194"/>
    </location>
</feature>
<feature type="site" description="Transition state stabilizer" evidence="1">
    <location>
        <position position="255"/>
    </location>
</feature>
<evidence type="ECO:0000255" key="1">
    <source>
        <dbReference type="HAMAP-Rule" id="MF_00020"/>
    </source>
</evidence>
<sequence>MITVLVLNAGSSSLKASLYRLAPEIGATAVRPPAPLWQGLLDWGQNPTVARLKVTTANQHYEANLTHPEGGIAGLRDWLKSLLDTLTSGQTKLLENLAEITIIGHRVVHGGSRYQAPVRVDAQVKAAISELSEYAPLHNPANLLGMELMADICPQTPQVAVFDTAFHAQLPAVARTYAIPYELTTAGIQRYGFHGISHQYVSERAATLLQRPLAELHLITCHLGNGCSLTAVKGGVSVETTMGFTPTAGVMMGTRCGDIDPGILLYLLRRGWTVAELDRLVNRQSGLLGVSGVSNDLRQILAAIDQGNPQAQLAYDCFIYSLQRGIASLLPALGRLDGLVFTAGIGENAPGVRRDICRGLGWLGIELDSTANEKGQGDRNIALPTAPVSVLVVQTQEDWAIARACGQLLSLPISS</sequence>